<gene>
    <name evidence="20 25" type="primary">mom-5</name>
    <name evidence="25" type="ORF">T23D8.1</name>
</gene>
<reference evidence="22" key="1">
    <citation type="journal article" date="1997" name="Cell">
        <title>Wnt signaling and an APC-related gene specify endoderm in early C. elegans embryos.</title>
        <authorList>
            <person name="Rocheleau C.E."/>
            <person name="Downs W.D."/>
            <person name="Lin R."/>
            <person name="Wittmann C."/>
            <person name="Bei Y."/>
            <person name="Cha Y.-H."/>
            <person name="Ali M."/>
            <person name="Priess J.R."/>
            <person name="Mello C.C."/>
        </authorList>
    </citation>
    <scope>NUCLEOTIDE SEQUENCE [MRNA] (ISOFORM A)</scope>
    <scope>FUNCTION</scope>
    <scope>DISRUPTION PHENOTYPE</scope>
    <source>
        <strain evidence="22">Bristol N2</strain>
    </source>
</reference>
<reference evidence="23" key="2">
    <citation type="journal article" date="1998" name="Science">
        <title>Genome sequence of the nematode C. elegans: a platform for investigating biology.</title>
        <authorList>
            <consortium name="The C. elegans sequencing consortium"/>
        </authorList>
    </citation>
    <scope>NUCLEOTIDE SEQUENCE [LARGE SCALE GENOMIC DNA]</scope>
    <source>
        <strain evidence="23">Bristol N2</strain>
    </source>
</reference>
<reference evidence="21" key="3">
    <citation type="journal article" date="1997" name="Cell">
        <title>Wnt signaling polarizes an early C. elegans blastomere to distinguish endoderm from mesoderm.</title>
        <authorList>
            <person name="Thorpe C.J."/>
            <person name="Schlesinger A."/>
            <person name="Carter J.C."/>
            <person name="Bowerman B."/>
        </authorList>
    </citation>
    <scope>FUNCTION</scope>
    <scope>DISRUPTION PHENOTYPE</scope>
</reference>
<reference evidence="21" key="4">
    <citation type="journal article" date="2003" name="Development">
        <title>Establishment of POP-1 asymmetry in early C. elegans embryos.</title>
        <authorList>
            <person name="Park F.D."/>
            <person name="Priess J.R."/>
        </authorList>
    </citation>
    <scope>FUNCTION</scope>
    <scope>DISRUPTION PHENOTYPE</scope>
</reference>
<reference evidence="21" key="5">
    <citation type="journal article" date="2004" name="Curr. Biol.">
        <title>C. elegans MOM-5/frizzled functions in MOM-2/Wnt-independent cell polarity and is localized asymmetrically prior to cell division.</title>
        <authorList>
            <person name="Park F.D."/>
            <person name="Tenlen J.R."/>
            <person name="Priess J.R."/>
        </authorList>
    </citation>
    <scope>FUNCTION</scope>
    <scope>SUBCELLULAR LOCATION</scope>
    <scope>DEVELOPMENTAL STAGE</scope>
    <scope>DISRUPTION PHENOTYPE</scope>
</reference>
<reference evidence="21" key="6">
    <citation type="journal article" date="2005" name="Dev. Biol.">
        <title>MOM-5 frizzled regulates the distribution of DSH-2 to control C. elegans asymmetric neuroblast divisions.</title>
        <authorList>
            <person name="Hawkins N.C."/>
            <person name="Ellis G.C."/>
            <person name="Bowerman B."/>
            <person name="Garriga G."/>
        </authorList>
    </citation>
    <scope>FUNCTION</scope>
    <scope>DISRUPTION PHENOTYPE</scope>
</reference>
<reference evidence="21" key="7">
    <citation type="journal article" date="2005" name="Dev. Biol.">
        <title>The C. elegans Frizzled CFZ-2 is required for cell migration and interacts with multiple Wnt signaling pathways.</title>
        <authorList>
            <person name="Zinovyeva A.Y."/>
            <person name="Forrester W.C."/>
        </authorList>
    </citation>
    <scope>FUNCTION</scope>
    <scope>DISRUPTION PHENOTYPE</scope>
</reference>
<reference evidence="21" key="8">
    <citation type="journal article" date="2006" name="Dev. Cell">
        <title>Multiple Wnts and frizzled receptors regulate anteriorly directed cell and growth cone migrations in Caenorhabditis elegans.</title>
        <authorList>
            <person name="Pan C.L."/>
            <person name="Howell J.E."/>
            <person name="Clark S.G."/>
            <person name="Hilliard M."/>
            <person name="Cordes S."/>
            <person name="Bargmann C.I."/>
            <person name="Garriga G."/>
        </authorList>
    </citation>
    <scope>FUNCTION</scope>
    <scope>DISRUPTION PHENOTYPE</scope>
</reference>
<reference evidence="21" key="9">
    <citation type="journal article" date="2006" name="Dev. Biol.">
        <title>Multiple redundant Wnt signaling components function in two processes during C. elegans vulval development.</title>
        <authorList>
            <person name="Gleason J.E."/>
            <person name="Szyleyko E.A."/>
            <person name="Eisenmann D.M."/>
        </authorList>
    </citation>
    <scope>FUNCTION</scope>
</reference>
<reference evidence="21" key="10">
    <citation type="journal article" date="2010" name="PLoS Biol.">
        <title>The Wnt pathway controls cell death engulfment, spindle orientation, and migration through CED-10/Rac.</title>
        <authorList>
            <person name="Cabello J."/>
            <person name="Neukomm L.J."/>
            <person name="Guenesdogan U."/>
            <person name="Burkart K."/>
            <person name="Charette S.J."/>
            <person name="Lochnit G."/>
            <person name="Hengartner M.O."/>
            <person name="Schnabel R."/>
        </authorList>
    </citation>
    <scope>FUNCTION</scope>
    <scope>DISRUPTION PHENOTYPE</scope>
</reference>
<reference evidence="21" key="11">
    <citation type="journal article" date="2011" name="PLoS Genet.">
        <title>Multiple Wnts redundantly control polarity orientation in Caenorhabditis elegans epithelial stem cells.</title>
        <authorList>
            <person name="Yamamoto Y."/>
            <person name="Takeshita H."/>
            <person name="Sawa H."/>
        </authorList>
    </citation>
    <scope>FUNCTION</scope>
</reference>
<reference evidence="21" key="12">
    <citation type="journal article" date="2013" name="Mol. Syst. Biol.">
        <title>Deconvolving the roles of Wnt ligands and receptors in sensing and amplification.</title>
        <authorList>
            <person name="Tan R.Z."/>
            <person name="Ji N."/>
            <person name="Mentink R.A."/>
            <person name="Korswagen H.C."/>
            <person name="van Oudenaarden A."/>
        </authorList>
    </citation>
    <scope>FUNCTION</scope>
    <scope>DEVELOPMENTAL STAGE</scope>
</reference>
<reference evidence="21" key="13">
    <citation type="journal article" date="2014" name="Development">
        <title>The conserved transmembrane RING finger protein PLR-1 downregulates Wnt signaling by reducing Frizzled, Ror and Ryk cell-surface levels in C. elegans.</title>
        <authorList>
            <person name="Moffat L.L."/>
            <person name="Robinson R.E."/>
            <person name="Bakoulis A."/>
            <person name="Clark S.G."/>
        </authorList>
    </citation>
    <scope>FUNCTION</scope>
    <scope>SUBCELLULAR LOCATION</scope>
    <scope>DEVELOPMENTAL STAGE</scope>
    <scope>MUTAGENESIS OF LYS-343; LYS-430; LYS-442; LYS-445; LYS-541 AND LYS-548</scope>
</reference>
<reference evidence="21" key="14">
    <citation type="journal article" date="2014" name="Dev. Cell">
        <title>Cell intrinsic modulation of Wnt signaling controls neuroblast migration in C. elegans.</title>
        <authorList>
            <person name="Mentink R.A."/>
            <person name="Middelkoop T.C."/>
            <person name="Rella L."/>
            <person name="Ji N."/>
            <person name="Tang C.Y."/>
            <person name="Betist M.C."/>
            <person name="van Oudenaarden A."/>
            <person name="Korswagen H.C."/>
        </authorList>
    </citation>
    <scope>FUNCTION</scope>
    <scope>DEVELOPMENTAL STAGE</scope>
</reference>
<reference evidence="21" key="15">
    <citation type="journal article" date="2015" name="Dev. Biol.">
        <title>Autonomous and nonautonomous regulation of Wnt-mediated neuronal polarity by the C. elegans Ror kinase CAM-1.</title>
        <authorList>
            <person name="Chien S.C."/>
            <person name="Gurling M."/>
            <person name="Kim C."/>
            <person name="Craft T."/>
            <person name="Forrester W."/>
            <person name="Garriga G."/>
        </authorList>
    </citation>
    <scope>FUNCTION</scope>
</reference>
<reference evidence="21" key="16">
    <citation type="journal article" date="2015" name="PLoS Genet.">
        <title>The Wnt frizzled receptor MOM-5 regulates the UNC-5 Netrin receptor through small GTPase-dependent signaling to determine the polarity of migrating cells.</title>
        <authorList>
            <person name="Levy-Strumpf N."/>
            <person name="Krizus M."/>
            <person name="Zheng H."/>
            <person name="Brown L."/>
            <person name="Culotti J.G."/>
        </authorList>
    </citation>
    <scope>FUNCTION</scope>
    <scope>DEVELOPMENTAL STAGE</scope>
    <scope>DISRUPTION PHENOTYPE</scope>
</reference>
<accession>A0A0K3AWM6</accession>
<accession>G5EEF7</accession>
<proteinExistence type="evidence at protein level"/>
<keyword id="KW-0025">Alternative splicing</keyword>
<keyword id="KW-1003">Cell membrane</keyword>
<keyword id="KW-0217">Developmental protein</keyword>
<keyword id="KW-1015">Disulfide bond</keyword>
<keyword id="KW-0967">Endosome</keyword>
<keyword id="KW-0325">Glycoprotein</keyword>
<keyword id="KW-0472">Membrane</keyword>
<keyword id="KW-0675">Receptor</keyword>
<keyword id="KW-1185">Reference proteome</keyword>
<keyword id="KW-0732">Signal</keyword>
<keyword id="KW-0812">Transmembrane</keyword>
<keyword id="KW-1133">Transmembrane helix</keyword>
<keyword id="KW-0879">Wnt signaling pathway</keyword>
<comment type="function">
    <text evidence="5 6 7 8 9 10 11 12 14 15 16 17 18 19 21">Receptor for Wnt proteins (PubMed:16930586, PubMed:22022276, PubMed:23295860, PubMed:24401370, PubMed:26292279). Most frizzled receptors are coupled to the beta-catenin canonical signaling pathway, which leads to the activation of disheveled proteins, inhibition of gsk-3 kinase, nuclear accumulation of beta-catenin and activation of Wnt target genes (Probable). A second signaling pathway involving PKC and calcium fluxes has been seen for some family members, but it is not yet clear if it represents a distinct pathway or if it can be integrated in the canonical pathway, as pkc seems to be required for Wnt-mediated inactivation of gsk-3 kinase (Probable). Both pathways seem to involve interactions with G-proteins (Probable). Required in embryonic development for the correct positioning and orientation of the mitotic spindles and division planes in blastomere cells (PubMed:20126385, PubMed:9288749, PubMed:9288750). During early embryonic cell divisions, directs the asymmetric positioning of transcription factors such as pop-1 and dsh-2 in daughter cells in order to determine cell fate specification (PubMed:12810601, PubMed:15620652, PubMed:15990090). Acts redundantly with other Wnt receptors such as lin-17 to control vulval precursor cell specification and also the polarity of different cell types including distal tip cells, seam cells, AVG interneurons and P-cells and their descendants (PubMed:16930586, PubMed:20126385, PubMed:22022276, PubMed:23295860, PubMed:24401370, PubMed:26292279). Plays a role in the migration of cell types including distal tip cells and the QR neuroblast descendants, QR.p and QR.pa during larval development (PubMed:20126385, PubMed:25373777, PubMed:26292279). Negatively regulates the unc-6/Netrin receptors unc-5 and unc-40 to control distal tip cell polarity and migration (PubMed:26292279). Acts through ced-5/DOCK180 and ced-10/Rac to control both distal tip cell migration and the phagocytic clearance of apoptotic cell corpses (PubMed:20126385). Furthermore, it is also required for the migration and axon guidance of the different neuronal cell types including CAN, ALM, HSN and the two mechanosensory neurons AVM and PVM (PubMed:16109397, PubMed:16516839, PubMed:25917219). Mediates Wnt receptor cfz-2 in directing ALM migration, but may also act redundantly with the Wnt receptors cfz-2 and mig-1 to direct the migration of other neuronal cell types including CAN and HSN (PubMed:16109397, PubMed:16516839). Mediates Wnt ligand egl-20 in the control of the anterior-posterior axon guidance of AVM and PVM neurons (PubMed:16516839).</text>
</comment>
<comment type="subcellular location">
    <subcellularLocation>
        <location evidence="6 14">Cell membrane</location>
        <topology evidence="2">Multi-pass membrane protein</topology>
    </subcellularLocation>
    <subcellularLocation>
        <location evidence="6 14">Early endosome</location>
    </subcellularLocation>
    <text evidence="6 14">Uniformaly localized along the cell membrane throughout the cell cycle, but occasionally enriched at prophase towards the posterior pole of the cell (PubMed:15620652). Sequestered from the cell membrane to endosomes by plr-1 to prevent Wnt signaling (PubMed:24401370).</text>
</comment>
<comment type="alternative products">
    <event type="alternative splicing"/>
    <isoform>
        <id>A0A0K3AWM6-1</id>
        <name evidence="25">b</name>
        <sequence type="displayed"/>
    </isoform>
    <isoform>
        <id>A0A0K3AWM6-2</id>
        <name evidence="24">a</name>
        <sequence type="described" ref="VSP_058705"/>
    </isoform>
</comment>
<comment type="developmental stage">
    <text evidence="6 13 14 15 17">Expressed in the 32-cell stage ABar blastomere and onwards into late embryogenesis (PubMed:15620652, PubMed:24401370). In late embryogenesis, enriched at the leading edges of postmitotic epidermal cells during ventral enclosure (PubMed:15620652). Asymmetrically expressed during the larval stages of development in cells of the gonad, vulva, tail, nervous system and hypodermis (PubMed:15620652). Expressed predominantly in QR neuroblast descendants and to a lesser extent in QL neuroblast descendants during the larval stages of development (PubMed:25373777). Expressed highly in anterior P-cells during larval development (PubMed:23295860). Post-embryonically, it is up-regulated at the transition phase after dorsal-ventral migration of distal tip cells and at the beginning of their anterior-posterior migration (PubMed:26292279).</text>
</comment>
<comment type="domain">
    <text evidence="1">The FZ domain is involved in binding with Wnt ligands.</text>
</comment>
<comment type="disruption phenotype">
    <text evidence="5 6 7 8 9 11 17 18 19">Embryonic lethal with severely defective embryonic morphogenesis (PubMed:15620652, PubMed:9288749, PubMed:9288750). Embryos have defective mitotic spindle orientation in the 8-cell stage ABar blastomere (PubMed:20126385, PubMed:9288749, PubMed:9288750). Furthermore, there is disrupted asymmetric distribution of the transcription factor pop-1 and the disheveled homolog dsh-2, which are required for cell fate decisions in 8-cell stage ABar blastomeres and their descendants (PubMed:12810601, PubMed:15990090). There is also abnormal distal tip cell migration along the anterior-posterior axis of the body and defective clearance of apoptotic cell corpses in embryos (PubMed:20126385, PubMed:26292279). Both double knockout with unc-5 RNAi and knockdown by RNAi in an unc-40 mutant background suppresses the migratory defect of distal tip cells in the mom-5 and unc-40 single mutants (PubMed:26292279). Double knockout with Wnt receptor cfz-2 results in enhanced CAN neuron migration defects and also rescues the ALM migration defects in the single cfz-2 knockout (PubMed:16109397). Double knockout with Wnt receptor mig-1 results in enhanced HSN neuron migration defects and also in anterior-posterior axon guidance defects of PVM and AVM touch neurons (PubMed:16516839). RNAi-mediated knockdown results in embryonic lethality, but surviving animals display morphogenesis defects and PHA phasmid neuron duplication (PubMed:15990090).</text>
</comment>
<comment type="similarity">
    <text evidence="21">Belongs to the G-protein coupled receptor Fz/Smo family.</text>
</comment>
<sequence>MHRHILILFLFGCLSADQRLSSTSISSMNGFSTTRKCEHITIPMCKNLDYNQTVFPNLLGHTTQSEAGPAIAQFNPLIKVKCSEDIRLFLCTVYAPVCTVLEKPIQPCRELCLSAKNGCESLMKKFGFQWPDQLDCNKFPVTDLCVGKNSSESSNSKNYRSSNDVTFGVSTIANEVVLSPKKCPHHMHTTSGSHFSLPLLSGRLPECSLTCEADNQVPMMFDGRVRRILRIWTAAWSVACFVCSLFTLVTFLVDLSRFAYPVRPILYLAFCYLAISTVYMIGVVGEDGFACGTYGSTPTTLVTQGGENVGCSALAVVHYFFFMSSCAWWLVLCLAWFLAANLKWGAESIAALSPYFHAMCWGVPAVLSVTVLVTNSVDGDVFTGICSVGNLNPSALVYFFFTPIVVSLALGAVLLVCGIWSMIRIRSYIKLQHADVERNISKLEKLMLRIGAFAIMYSLPTAMNAAIMWYQAVNMPAWLEGWLHHRCVRLQDRELFGFTYPVDDCPMDPKVAAPEIIVFLLKYVSQLVVGITCAIWVVSSKTLSSYHKAYLALSSRSPTVPAHVDQVNMR</sequence>
<organism evidence="23">
    <name type="scientific">Caenorhabditis elegans</name>
    <dbReference type="NCBI Taxonomy" id="6239"/>
    <lineage>
        <taxon>Eukaryota</taxon>
        <taxon>Metazoa</taxon>
        <taxon>Ecdysozoa</taxon>
        <taxon>Nematoda</taxon>
        <taxon>Chromadorea</taxon>
        <taxon>Rhabditida</taxon>
        <taxon>Rhabditina</taxon>
        <taxon>Rhabditomorpha</taxon>
        <taxon>Rhabditoidea</taxon>
        <taxon>Rhabditidae</taxon>
        <taxon>Peloderinae</taxon>
        <taxon>Caenorhabditis</taxon>
    </lineage>
</organism>
<protein>
    <recommendedName>
        <fullName evidence="20">Protein mom-5</fullName>
    </recommendedName>
</protein>
<evidence type="ECO:0000250" key="1">
    <source>
        <dbReference type="UniProtKB" id="Q9VVX3"/>
    </source>
</evidence>
<evidence type="ECO:0000255" key="2"/>
<evidence type="ECO:0000255" key="3">
    <source>
        <dbReference type="PROSITE-ProRule" id="PRU00090"/>
    </source>
</evidence>
<evidence type="ECO:0000255" key="4">
    <source>
        <dbReference type="PROSITE-ProRule" id="PRU00498"/>
    </source>
</evidence>
<evidence type="ECO:0000269" key="5">
    <source>
    </source>
</evidence>
<evidence type="ECO:0000269" key="6">
    <source>
    </source>
</evidence>
<evidence type="ECO:0000269" key="7">
    <source>
    </source>
</evidence>
<evidence type="ECO:0000269" key="8">
    <source>
    </source>
</evidence>
<evidence type="ECO:0000269" key="9">
    <source>
    </source>
</evidence>
<evidence type="ECO:0000269" key="10">
    <source>
    </source>
</evidence>
<evidence type="ECO:0000269" key="11">
    <source>
    </source>
</evidence>
<evidence type="ECO:0000269" key="12">
    <source>
    </source>
</evidence>
<evidence type="ECO:0000269" key="13">
    <source>
    </source>
</evidence>
<evidence type="ECO:0000269" key="14">
    <source>
    </source>
</evidence>
<evidence type="ECO:0000269" key="15">
    <source>
    </source>
</evidence>
<evidence type="ECO:0000269" key="16">
    <source>
    </source>
</evidence>
<evidence type="ECO:0000269" key="17">
    <source>
    </source>
</evidence>
<evidence type="ECO:0000269" key="18">
    <source>
    </source>
</evidence>
<evidence type="ECO:0000269" key="19">
    <source>
    </source>
</evidence>
<evidence type="ECO:0000303" key="20">
    <source>
    </source>
</evidence>
<evidence type="ECO:0000305" key="21"/>
<evidence type="ECO:0000312" key="22">
    <source>
        <dbReference type="EMBL" id="AAC47750.1"/>
    </source>
</evidence>
<evidence type="ECO:0000312" key="23">
    <source>
        <dbReference type="Proteomes" id="UP000001940"/>
    </source>
</evidence>
<evidence type="ECO:0000312" key="24">
    <source>
        <dbReference type="WormBase" id="T23D8.1a"/>
    </source>
</evidence>
<evidence type="ECO:0000312" key="25">
    <source>
        <dbReference type="WormBase" id="T23D8.1b"/>
    </source>
</evidence>
<dbReference type="EMBL" id="AF013953">
    <property type="protein sequence ID" value="AAC47750.1"/>
    <property type="molecule type" value="mRNA"/>
</dbReference>
<dbReference type="EMBL" id="BX284601">
    <property type="protein sequence ID" value="CAB03398.1"/>
    <property type="molecule type" value="Genomic_DNA"/>
</dbReference>
<dbReference type="EMBL" id="BX284601">
    <property type="protein sequence ID" value="CTQ86376.1"/>
    <property type="molecule type" value="Genomic_DNA"/>
</dbReference>
<dbReference type="PIR" id="T25162">
    <property type="entry name" value="T25162"/>
</dbReference>
<dbReference type="RefSeq" id="NP_001300437.1">
    <molecule id="A0A0K3AWM6-1"/>
    <property type="nucleotide sequence ID" value="NM_001313508.3"/>
</dbReference>
<dbReference type="RefSeq" id="NP_492635.1">
    <molecule id="A0A0K3AWM6-2"/>
    <property type="nucleotide sequence ID" value="NM_060234.7"/>
</dbReference>
<dbReference type="SMR" id="A0A0K3AWM6"/>
<dbReference type="FunCoup" id="A0A0K3AWM6">
    <property type="interactions" value="1158"/>
</dbReference>
<dbReference type="STRING" id="6239.T23D8.1b.1"/>
<dbReference type="GlyCosmos" id="A0A0K3AWM6">
    <property type="glycosylation" value="2 sites, No reported glycans"/>
</dbReference>
<dbReference type="PaxDb" id="6239-T23D8.1"/>
<dbReference type="EnsemblMetazoa" id="T23D8.1a.1">
    <molecule id="A0A0K3AWM6-2"/>
    <property type="protein sequence ID" value="T23D8.1a.1"/>
    <property type="gene ID" value="WBGene00003397"/>
</dbReference>
<dbReference type="EnsemblMetazoa" id="T23D8.1b.1">
    <molecule id="A0A0K3AWM6-1"/>
    <property type="protein sequence ID" value="T23D8.1b.1"/>
    <property type="gene ID" value="WBGene00003397"/>
</dbReference>
<dbReference type="GeneID" id="172856"/>
<dbReference type="KEGG" id="cel:CELE_T23D8.1"/>
<dbReference type="AGR" id="WB:WBGene00003397"/>
<dbReference type="CTD" id="172856"/>
<dbReference type="WormBase" id="T23D8.1a">
    <molecule id="A0A0K3AWM6-2"/>
    <property type="protein sequence ID" value="CE14048"/>
    <property type="gene ID" value="WBGene00003397"/>
    <property type="gene designation" value="mom-5"/>
</dbReference>
<dbReference type="WormBase" id="T23D8.1b">
    <molecule id="A0A0K3AWM6-1"/>
    <property type="protein sequence ID" value="CE50472"/>
    <property type="gene ID" value="WBGene00003397"/>
    <property type="gene designation" value="mom-5"/>
</dbReference>
<dbReference type="eggNOG" id="KOG3577">
    <property type="taxonomic scope" value="Eukaryota"/>
</dbReference>
<dbReference type="GeneTree" id="ENSGT00940000166686"/>
<dbReference type="InParanoid" id="A0A0K3AWM6"/>
<dbReference type="OMA" id="KFSRVWV"/>
<dbReference type="OrthoDB" id="10053709at2759"/>
<dbReference type="Reactome" id="R-CEL-4086398">
    <property type="pathway name" value="Ca2+ pathway"/>
</dbReference>
<dbReference type="Reactome" id="R-CEL-4086400">
    <property type="pathway name" value="PCP/CE pathway"/>
</dbReference>
<dbReference type="Reactome" id="R-CEL-4608870">
    <property type="pathway name" value="Asymmetric localization of PCP proteins"/>
</dbReference>
<dbReference type="Reactome" id="R-CEL-4641262">
    <property type="pathway name" value="Disassembly of the destruction complex and recruitment of AXIN to the membrane"/>
</dbReference>
<dbReference type="Reactome" id="R-CEL-4641263">
    <property type="pathway name" value="Regulation of FZD by ubiquitination"/>
</dbReference>
<dbReference type="Reactome" id="R-CEL-5140745">
    <property type="pathway name" value="WNT5A-dependent internalization of FZD2, FZD5 and ROR2"/>
</dbReference>
<dbReference type="SignaLink" id="A0A0K3AWM6"/>
<dbReference type="PRO" id="PR:A0A0K3AWM6"/>
<dbReference type="Proteomes" id="UP000001940">
    <property type="component" value="Chromosome I"/>
</dbReference>
<dbReference type="Bgee" id="WBGene00003397">
    <property type="expression patterns" value="Expressed in germ line (C elegans) and 13 other cell types or tissues"/>
</dbReference>
<dbReference type="GO" id="GO:0005769">
    <property type="term" value="C:early endosome"/>
    <property type="evidence" value="ECO:0007669"/>
    <property type="project" value="UniProtKB-SubCell"/>
</dbReference>
<dbReference type="GO" id="GO:0005886">
    <property type="term" value="C:plasma membrane"/>
    <property type="evidence" value="ECO:0000250"/>
    <property type="project" value="WormBase"/>
</dbReference>
<dbReference type="GO" id="GO:0042813">
    <property type="term" value="F:Wnt receptor activity"/>
    <property type="evidence" value="ECO:0000250"/>
    <property type="project" value="WormBase"/>
</dbReference>
<dbReference type="GO" id="GO:0017147">
    <property type="term" value="F:Wnt-protein binding"/>
    <property type="evidence" value="ECO:0000318"/>
    <property type="project" value="GO_Central"/>
</dbReference>
<dbReference type="GO" id="GO:0060070">
    <property type="term" value="P:canonical Wnt signaling pathway"/>
    <property type="evidence" value="ECO:0000318"/>
    <property type="project" value="GO_Central"/>
</dbReference>
<dbReference type="GO" id="GO:0009792">
    <property type="term" value="P:embryo development ending in birth or egg hatching"/>
    <property type="evidence" value="ECO:0000315"/>
    <property type="project" value="WormBase"/>
</dbReference>
<dbReference type="GO" id="GO:0048557">
    <property type="term" value="P:embryonic digestive tract morphogenesis"/>
    <property type="evidence" value="ECO:0000316"/>
    <property type="project" value="UniProtKB"/>
</dbReference>
<dbReference type="GO" id="GO:0048598">
    <property type="term" value="P:embryonic morphogenesis"/>
    <property type="evidence" value="ECO:0000315"/>
    <property type="project" value="UniProtKB"/>
</dbReference>
<dbReference type="GO" id="GO:0001714">
    <property type="term" value="P:endodermal cell fate specification"/>
    <property type="evidence" value="ECO:0000315"/>
    <property type="project" value="WormBase"/>
</dbReference>
<dbReference type="GO" id="GO:0043652">
    <property type="term" value="P:engulfment of apoptotic cell"/>
    <property type="evidence" value="ECO:0000315"/>
    <property type="project" value="WormBase"/>
</dbReference>
<dbReference type="GO" id="GO:0000132">
    <property type="term" value="P:establishment of mitotic spindle orientation"/>
    <property type="evidence" value="ECO:0000315"/>
    <property type="project" value="UniProtKB"/>
</dbReference>
<dbReference type="GO" id="GO:0007369">
    <property type="term" value="P:gastrulation"/>
    <property type="evidence" value="ECO:0000315"/>
    <property type="project" value="WormBase"/>
</dbReference>
<dbReference type="GO" id="GO:1904936">
    <property type="term" value="P:interneuron migration"/>
    <property type="evidence" value="ECO:0000316"/>
    <property type="project" value="UniProtKB"/>
</dbReference>
<dbReference type="GO" id="GO:0070986">
    <property type="term" value="P:left/right axis specification"/>
    <property type="evidence" value="ECO:0000315"/>
    <property type="project" value="UniProtKB"/>
</dbReference>
<dbReference type="GO" id="GO:0097475">
    <property type="term" value="P:motor neuron migration"/>
    <property type="evidence" value="ECO:0000316"/>
    <property type="project" value="UniProtKB"/>
</dbReference>
<dbReference type="GO" id="GO:0097402">
    <property type="term" value="P:neuroblast migration"/>
    <property type="evidence" value="ECO:0000315"/>
    <property type="project" value="UniProtKB"/>
</dbReference>
<dbReference type="GO" id="GO:0001764">
    <property type="term" value="P:neuron migration"/>
    <property type="evidence" value="ECO:0000316"/>
    <property type="project" value="UniProtKB"/>
</dbReference>
<dbReference type="GO" id="GO:0035567">
    <property type="term" value="P:non-canonical Wnt signaling pathway"/>
    <property type="evidence" value="ECO:0000318"/>
    <property type="project" value="GO_Central"/>
</dbReference>
<dbReference type="GO" id="GO:1905488">
    <property type="term" value="P:positive regulation of anterior/posterior axon guidance"/>
    <property type="evidence" value="ECO:0000316"/>
    <property type="project" value="UniProtKB"/>
</dbReference>
<dbReference type="GO" id="GO:1903356">
    <property type="term" value="P:positive regulation of distal tip cell migration"/>
    <property type="evidence" value="ECO:0000315"/>
    <property type="project" value="UniProtKB"/>
</dbReference>
<dbReference type="GO" id="GO:1901076">
    <property type="term" value="P:positive regulation of engulfment of apoptotic cell"/>
    <property type="evidence" value="ECO:0000314"/>
    <property type="project" value="UniProtKB"/>
</dbReference>
<dbReference type="GO" id="GO:1905485">
    <property type="term" value="P:positive regulation of motor neuron migration"/>
    <property type="evidence" value="ECO:0000316"/>
    <property type="project" value="UniProtKB"/>
</dbReference>
<dbReference type="GO" id="GO:1905491">
    <property type="term" value="P:positive regulation of sensory neuron axon guidance"/>
    <property type="evidence" value="ECO:0000316"/>
    <property type="project" value="UniProtKB"/>
</dbReference>
<dbReference type="GO" id="GO:1904937">
    <property type="term" value="P:sensory neuron migration"/>
    <property type="evidence" value="ECO:0000316"/>
    <property type="project" value="UniProtKB"/>
</dbReference>
<dbReference type="GO" id="GO:0016055">
    <property type="term" value="P:Wnt signaling pathway"/>
    <property type="evidence" value="ECO:0000250"/>
    <property type="project" value="WormBase"/>
</dbReference>
<dbReference type="GO" id="GO:0060069">
    <property type="term" value="P:Wnt signaling pathway, regulating spindle positioning"/>
    <property type="evidence" value="ECO:0000315"/>
    <property type="project" value="WormBase"/>
</dbReference>
<dbReference type="CDD" id="cd13951">
    <property type="entry name" value="7tmF_Frizzled_SMO"/>
    <property type="match status" value="1"/>
</dbReference>
<dbReference type="CDD" id="cd07458">
    <property type="entry name" value="CRD_FZ1_like"/>
    <property type="match status" value="1"/>
</dbReference>
<dbReference type="FunFam" id="1.10.2000.10:FF:000016">
    <property type="entry name" value="Frizzled"/>
    <property type="match status" value="1"/>
</dbReference>
<dbReference type="FunFam" id="1.20.1070.10:FF:000492">
    <property type="entry name" value="Protein CBR-MOM-5"/>
    <property type="match status" value="1"/>
</dbReference>
<dbReference type="Gene3D" id="1.10.2000.10">
    <property type="entry name" value="Frizzled cysteine-rich domain"/>
    <property type="match status" value="1"/>
</dbReference>
<dbReference type="Gene3D" id="1.20.1070.10">
    <property type="entry name" value="Rhodopsin 7-helix transmembrane proteins"/>
    <property type="match status" value="1"/>
</dbReference>
<dbReference type="InterPro" id="IPR047105">
    <property type="entry name" value="Frizzled-4/Mom-5_7TM"/>
</dbReference>
<dbReference type="InterPro" id="IPR015526">
    <property type="entry name" value="Frizzled/SFRP"/>
</dbReference>
<dbReference type="InterPro" id="IPR000539">
    <property type="entry name" value="Frizzled/Smoothened_7TM"/>
</dbReference>
<dbReference type="InterPro" id="IPR020067">
    <property type="entry name" value="Frizzled_dom"/>
</dbReference>
<dbReference type="InterPro" id="IPR036790">
    <property type="entry name" value="Frizzled_dom_sf"/>
</dbReference>
<dbReference type="InterPro" id="IPR017981">
    <property type="entry name" value="GPCR_2-like_7TM"/>
</dbReference>
<dbReference type="PANTHER" id="PTHR11309">
    <property type="entry name" value="FRIZZLED"/>
    <property type="match status" value="1"/>
</dbReference>
<dbReference type="PANTHER" id="PTHR11309:SF47">
    <property type="entry name" value="FRIZZLED"/>
    <property type="match status" value="1"/>
</dbReference>
<dbReference type="Pfam" id="PF01534">
    <property type="entry name" value="Frizzled"/>
    <property type="match status" value="1"/>
</dbReference>
<dbReference type="Pfam" id="PF01392">
    <property type="entry name" value="Fz"/>
    <property type="match status" value="1"/>
</dbReference>
<dbReference type="PRINTS" id="PR00489">
    <property type="entry name" value="FRIZZLED"/>
</dbReference>
<dbReference type="SMART" id="SM00063">
    <property type="entry name" value="FRI"/>
    <property type="match status" value="1"/>
</dbReference>
<dbReference type="SMART" id="SM01330">
    <property type="entry name" value="Frizzled"/>
    <property type="match status" value="1"/>
</dbReference>
<dbReference type="SUPFAM" id="SSF63501">
    <property type="entry name" value="Frizzled cysteine-rich domain"/>
    <property type="match status" value="1"/>
</dbReference>
<dbReference type="PROSITE" id="PS50038">
    <property type="entry name" value="FZ"/>
    <property type="match status" value="1"/>
</dbReference>
<dbReference type="PROSITE" id="PS50261">
    <property type="entry name" value="G_PROTEIN_RECEP_F2_4"/>
    <property type="match status" value="1"/>
</dbReference>
<name>MOM5_CAEEL</name>
<feature type="signal peptide" evidence="2">
    <location>
        <begin position="1"/>
        <end position="16"/>
    </location>
</feature>
<feature type="chain" id="PRO_5005493958" description="Protein mom-5" evidence="21">
    <location>
        <begin position="17"/>
        <end position="570"/>
    </location>
</feature>
<feature type="topological domain" description="Extracellular" evidence="21">
    <location>
        <begin position="17"/>
        <end position="230"/>
    </location>
</feature>
<feature type="transmembrane region" description="Helical; Name=1" evidence="2">
    <location>
        <begin position="231"/>
        <end position="251"/>
    </location>
</feature>
<feature type="topological domain" description="Cytoplasmic" evidence="21">
    <location>
        <begin position="252"/>
        <end position="264"/>
    </location>
</feature>
<feature type="transmembrane region" description="Helical; Name=2" evidence="2">
    <location>
        <begin position="265"/>
        <end position="285"/>
    </location>
</feature>
<feature type="topological domain" description="Extracellular" evidence="21">
    <location>
        <begin position="286"/>
        <end position="319"/>
    </location>
</feature>
<feature type="transmembrane region" description="Helical; Name=3" evidence="2">
    <location>
        <begin position="320"/>
        <end position="340"/>
    </location>
</feature>
<feature type="topological domain" description="Cytoplasmic" evidence="21">
    <location>
        <begin position="341"/>
        <end position="348"/>
    </location>
</feature>
<feature type="transmembrane region" description="Helical; Name=4" evidence="2">
    <location>
        <begin position="349"/>
        <end position="369"/>
    </location>
</feature>
<feature type="topological domain" description="Extracellular" evidence="21">
    <location>
        <begin position="370"/>
        <end position="395"/>
    </location>
</feature>
<feature type="transmembrane region" description="Helical; Name=5" evidence="2">
    <location>
        <begin position="396"/>
        <end position="416"/>
    </location>
</feature>
<feature type="topological domain" description="Cytoplasmic" evidence="21">
    <location>
        <begin position="417"/>
        <end position="449"/>
    </location>
</feature>
<feature type="transmembrane region" description="Helical; Name=6" evidence="2">
    <location>
        <begin position="450"/>
        <end position="470"/>
    </location>
</feature>
<feature type="topological domain" description="Extracellular" evidence="21">
    <location>
        <begin position="471"/>
        <end position="515"/>
    </location>
</feature>
<feature type="transmembrane region" description="Helical; Name=7" evidence="2">
    <location>
        <begin position="516"/>
        <end position="536"/>
    </location>
</feature>
<feature type="topological domain" description="Cytoplasmic" evidence="21">
    <location>
        <begin position="537"/>
        <end position="570"/>
    </location>
</feature>
<feature type="domain" description="FZ" evidence="3">
    <location>
        <begin position="32"/>
        <end position="148"/>
    </location>
</feature>
<feature type="glycosylation site" description="N-linked (GlcNAc...) asparagine" evidence="4">
    <location>
        <position position="51"/>
    </location>
</feature>
<feature type="glycosylation site" description="N-linked (GlcNAc...) asparagine" evidence="4">
    <location>
        <position position="149"/>
    </location>
</feature>
<feature type="disulfide bond" evidence="3">
    <location>
        <begin position="37"/>
        <end position="98"/>
    </location>
</feature>
<feature type="disulfide bond" evidence="3">
    <location>
        <begin position="45"/>
        <end position="91"/>
    </location>
</feature>
<feature type="disulfide bond" evidence="3">
    <location>
        <begin position="82"/>
        <end position="119"/>
    </location>
</feature>
<feature type="disulfide bond" evidence="3">
    <location>
        <begin position="108"/>
        <end position="145"/>
    </location>
</feature>
<feature type="disulfide bond" evidence="3">
    <location>
        <begin position="112"/>
        <end position="136"/>
    </location>
</feature>
<feature type="splice variant" id="VSP_058705" description="In isoform a." evidence="21">
    <original>NYR</original>
    <variation>K</variation>
    <location>
        <begin position="158"/>
        <end position="160"/>
    </location>
</feature>
<feature type="mutagenesis site" description="Abolishes sequestration in endosomes by plr-1; when associated with R-430; R-442; R-445; R-541 and R548." evidence="14">
    <original>K</original>
    <variation>R</variation>
    <location>
        <position position="343"/>
    </location>
</feature>
<feature type="mutagenesis site" description="Abolishes sequestration in endosomes by plr-1; when associated with R-343; R-442; R-445; R-541 and R548." evidence="14">
    <original>K</original>
    <variation>R</variation>
    <location>
        <position position="430"/>
    </location>
</feature>
<feature type="mutagenesis site" description="Abolishes sequestration in endosomes by plr-1; when associated with R-343; R-430; R-445; R-541 and R548." evidence="14">
    <original>K</original>
    <variation>R</variation>
    <location>
        <position position="442"/>
    </location>
</feature>
<feature type="mutagenesis site" description="Abolishes sequestration in endosomes by plr-1; when associated with R-343; R-430; R-442; R-541 and R548." evidence="14">
    <original>K</original>
    <variation>R</variation>
    <location>
        <position position="445"/>
    </location>
</feature>
<feature type="mutagenesis site" description="Abolishes sequestration in endosomes by plr-1; when associated with R-343; R-430; R-442; R-445 and R548." evidence="14">
    <original>K</original>
    <variation>R</variation>
    <location>
        <position position="541"/>
    </location>
</feature>
<feature type="mutagenesis site" description="Abolishes sequestration in endosomes by plr-1; when associated with R-343; R-430; R-442; R-445 and R541." evidence="14">
    <original>K</original>
    <variation>R</variation>
    <location>
        <position position="548"/>
    </location>
</feature>